<protein>
    <recommendedName>
        <fullName>Polyprotein P3</fullName>
    </recommendedName>
    <domain>
        <recommendedName>
            <fullName>Putative movement protein</fullName>
            <shortName>MP</shortName>
        </recommendedName>
    </domain>
    <domain>
        <recommendedName>
            <fullName>Capsid protein</fullName>
        </recommendedName>
        <alternativeName>
            <fullName>Coat protein</fullName>
            <shortName>CP</shortName>
        </alternativeName>
    </domain>
    <domain>
        <recommendedName>
            <fullName>Protease</fullName>
            <shortName>PR</shortName>
            <ecNumber>3.4.23.-</ecNumber>
        </recommendedName>
    </domain>
    <domain>
        <recommendedName>
            <fullName>Reverse transcriptase</fullName>
            <shortName>RT</shortName>
            <ecNumber>2.7.7.49</ecNumber>
        </recommendedName>
    </domain>
    <domain>
        <recommendedName>
            <fullName>Ribonuclease H</fullName>
            <ecNumber>3.1.26.4</ecNumber>
        </recommendedName>
    </domain>
</protein>
<comment type="function">
    <text evidence="1">Capsid protein self assembles to form a bacilliform capsid about 90-900 nm in length. The capsid encapsulates the genomic dsDNA. Following virus entry into host cell, provides nuclear import of the viral genome. Virus particles do not enter the nucleus, but are targeted to the nuclear membrane through the interaction with host importins (By similarity).</text>
</comment>
<comment type="catalytic activity">
    <reaction evidence="5">
        <text>Endonucleolytic cleavage to 5'-phosphomonoester.</text>
        <dbReference type="EC" id="3.1.26.4"/>
    </reaction>
</comment>
<comment type="catalytic activity">
    <reaction evidence="4">
        <text>DNA(n) + a 2'-deoxyribonucleoside 5'-triphosphate = DNA(n+1) + diphosphate</text>
        <dbReference type="Rhea" id="RHEA:22508"/>
        <dbReference type="Rhea" id="RHEA-COMP:17339"/>
        <dbReference type="Rhea" id="RHEA-COMP:17340"/>
        <dbReference type="ChEBI" id="CHEBI:33019"/>
        <dbReference type="ChEBI" id="CHEBI:61560"/>
        <dbReference type="ChEBI" id="CHEBI:173112"/>
        <dbReference type="EC" id="2.7.7.49"/>
    </reaction>
</comment>
<comment type="PTM">
    <text evidence="8">Polyprotein P3 is presumably proteolytically cleaved into several chains by viral protease.</text>
</comment>
<name>POL_COYMV</name>
<organism>
    <name type="scientific">Commelina yellow mottle virus</name>
    <name type="common">CoYMV</name>
    <dbReference type="NCBI Taxonomy" id="10653"/>
    <lineage>
        <taxon>Viruses</taxon>
        <taxon>Riboviria</taxon>
        <taxon>Pararnavirae</taxon>
        <taxon>Artverviricota</taxon>
        <taxon>Revtraviricetes</taxon>
        <taxon>Ortervirales</taxon>
        <taxon>Caulimoviridae</taxon>
        <taxon>Badnavirus</taxon>
        <taxon>Badnavirus maculacommelinae</taxon>
    </lineage>
</organism>
<organismHost>
    <name type="scientific">Commelina</name>
    <dbReference type="NCBI Taxonomy" id="4743"/>
</organismHost>
<sequence>MATRRLPAVTQTDGSRTATESGVPEYEDQIRSYRNDQRRRHIWAGRGRRLLSIMPGVSSSERTLEMQMNPEVQLQRSMNHRAEAVPAEVLYRTFHGSVNHRVYSHRSEERMMVVNGSQVDRSFIQESSFEVLSRTGIEFIHIGVMLVRIQILHRKFAGTMALIVFRDTRWSDDRAVLAAMEIDLSEGNQIVYVLPDIMMTIKSFYRHIQICVMTKGYDGWQGEDNLLITRGLTGRLSNTSNVGFAYDVKAMVEHLQSNGVKAIKGEKWDAKRFHNGQWNIEPSKVVVPMQPTEMKAVSNYDGTTSLRFSNYAAASTSKPPQYNEKDEEINEDEQEINHSLNLILNDEESTDEDEEYYQYQRYAWSQVGDSTFYYDTDGVWEEIDRCNDLPEYVPSETSTPTIDESEAIIDEFLEHAYEQRCDSDESLQSGDPRKYEYPTPQSSPEHLDNESRSRSSSASSTSMQDDVEEIVRLMKEMRMKKQKKKKAQQALSSQAQEEPIIEENIEENKQAQEEPTQEEIPTHKENQPEEIQNEEIHVFEEEPAFKHLAAQLSELVNMAESSGQSGVGFQPPVNAQPDVNMEGPAGYAPATSQATWSNGVNIPVKSANFRWKGPVGNFQLPSAQGKDGAMLVFGMNYSPEVFDRWASITRNYISSFNFNDGGDKIAWMEDLLGETERKIFVSWRMRFKDEYQNLAKIANQDGGTQAILSQIRRIFLGEDPVLGQNTVQNIAFRKLKQLVCPNYQSIRRYLMDYLTLAAETGLMWSETEGPAISEELFTKMPAAIGERVAQAYKIMDPTSAVNLPSRVYFTINYLTEQCKEASYMRSLKALDFCRDFPIEGYYGRSGEKKKYTARKATKYTGKAHDNHIRVTKAKYQRKCKCYICGQEGHYANQCRNKHKDQQRVAILQSLDLKENEEVVSADDKEEEDDEIFSVLGEEDYQEETIMVLEEDDIQQIIKEFSKFGDLSRRNVGPNFPGPAEVQMGVLKPKSSWRRPIQATLEEINCHHNWTAISTGQLACRSCKQFLAGVQCHHCHAVYCFMCAEAYHDVQAEKILSKDYSFSARGKKGKAVIIEEDEIEGEFLISQLQQENQRLQKQVERLQEELMKLHREKDEALKHSEKASRVFSTIQESDEAELNLIKEELRQFKEETRMAIAQLKEAIIVQEEDTIEERCAMILEEKHTENIYSATAKAEYNGLYNVKVGIKPDNMEPYYINAIVDTGATACLIQISAIPENYYEDAKVTVNFRSVLGIGTSTQMIKAGRILIGEQYFRMPVTYVMNMGLSPGIQMIIGCSFIRSLEGGLRIEKDIITFYKLVTSIETSRTTQVANSIEELELSEDEYLNIAASVETPSFLDQEFARKNKDLLKEMKEMKYIGENPMEFWKNNKIKCKLNIINPDIKIMGRPIKHVTPGDEEAMTRQINLLLQMKVIRPSESKHRSTAFIVRSGTEIDPITGKEKKGKERMVFNYKLLNENTESDQYSLPGINTIISKVGRSKIYSKFDLKSGFWQVAMEEESVPWTAFLAGNKLYEWLVMPFGLKNAPAIFQRKMDNVFKGTEKFIAVYIDDILVFSETAEQHSQHLYTMLQLCKENGLILSPTKMKIGTPEIDFLGASLGCTKIKLQPHIISKICDFSDEKLATPEGMRSWLGILSYARNYIQDIGKLVQPLRQKMAPTGDKRMNPETWKMVRQIKEKVKNLPDLQLPPKDSFIIIETDGCMTGWGAVCKWKMSKHDPRSTERICAYASGSFNPIKSTIDAEIQAAIHGLDKFKIYYLDKKELIIRSDCEAIIKFYNKTNENKPSRVRWLTFSDFLTGLGITVTFEHIDGKHNGLADALSRMINFIVEKNDESPYRFTSSVEDALKVCNDDHGRNLISAVINDIITVLRR</sequence>
<evidence type="ECO:0000250" key="1"/>
<evidence type="ECO:0000255" key="2">
    <source>
        <dbReference type="PROSITE-ProRule" id="PRU00047"/>
    </source>
</evidence>
<evidence type="ECO:0000255" key="3">
    <source>
        <dbReference type="PROSITE-ProRule" id="PRU00275"/>
    </source>
</evidence>
<evidence type="ECO:0000255" key="4">
    <source>
        <dbReference type="PROSITE-ProRule" id="PRU00405"/>
    </source>
</evidence>
<evidence type="ECO:0000255" key="5">
    <source>
        <dbReference type="PROSITE-ProRule" id="PRU00408"/>
    </source>
</evidence>
<evidence type="ECO:0000255" key="6">
    <source>
        <dbReference type="PROSITE-ProRule" id="PRU10094"/>
    </source>
</evidence>
<evidence type="ECO:0000256" key="7">
    <source>
        <dbReference type="SAM" id="MobiDB-lite"/>
    </source>
</evidence>
<evidence type="ECO:0000305" key="8"/>
<proteinExistence type="inferred from homology"/>
<dbReference type="EC" id="3.4.23.-"/>
<dbReference type="EC" id="2.7.7.49"/>
<dbReference type="EC" id="3.1.26.4"/>
<dbReference type="EMBL" id="X52938">
    <property type="protein sequence ID" value="CAA37110.1"/>
    <property type="molecule type" value="Genomic_DNA"/>
</dbReference>
<dbReference type="PIR" id="S11480">
    <property type="entry name" value="S11480"/>
</dbReference>
<dbReference type="RefSeq" id="NP_039820.1">
    <property type="nucleotide sequence ID" value="NC_001343.1"/>
</dbReference>
<dbReference type="SMR" id="P19199"/>
<dbReference type="MEROPS" id="A03.004"/>
<dbReference type="GeneID" id="1489554"/>
<dbReference type="KEGG" id="vg:1489554"/>
<dbReference type="Proteomes" id="UP000002243">
    <property type="component" value="Genome"/>
</dbReference>
<dbReference type="GO" id="GO:0043657">
    <property type="term" value="C:host cell"/>
    <property type="evidence" value="ECO:0007669"/>
    <property type="project" value="GOC"/>
</dbReference>
<dbReference type="GO" id="GO:0004190">
    <property type="term" value="F:aspartic-type endopeptidase activity"/>
    <property type="evidence" value="ECO:0007669"/>
    <property type="project" value="UniProtKB-KW"/>
</dbReference>
<dbReference type="GO" id="GO:0003676">
    <property type="term" value="F:nucleic acid binding"/>
    <property type="evidence" value="ECO:0007669"/>
    <property type="project" value="InterPro"/>
</dbReference>
<dbReference type="GO" id="GO:0003964">
    <property type="term" value="F:RNA-directed DNA polymerase activity"/>
    <property type="evidence" value="ECO:0007669"/>
    <property type="project" value="UniProtKB-KW"/>
</dbReference>
<dbReference type="GO" id="GO:0004523">
    <property type="term" value="F:RNA-DNA hybrid ribonuclease activity"/>
    <property type="evidence" value="ECO:0007669"/>
    <property type="project" value="UniProtKB-EC"/>
</dbReference>
<dbReference type="GO" id="GO:0008270">
    <property type="term" value="F:zinc ion binding"/>
    <property type="evidence" value="ECO:0007669"/>
    <property type="project" value="UniProtKB-KW"/>
</dbReference>
<dbReference type="GO" id="GO:0006508">
    <property type="term" value="P:proteolysis"/>
    <property type="evidence" value="ECO:0007669"/>
    <property type="project" value="UniProtKB-KW"/>
</dbReference>
<dbReference type="GO" id="GO:0046718">
    <property type="term" value="P:symbiont entry into host cell"/>
    <property type="evidence" value="ECO:0007669"/>
    <property type="project" value="UniProtKB-KW"/>
</dbReference>
<dbReference type="GO" id="GO:0046740">
    <property type="term" value="P:transport of virus in host, cell to cell"/>
    <property type="evidence" value="ECO:0007669"/>
    <property type="project" value="UniProtKB-KW"/>
</dbReference>
<dbReference type="GO" id="GO:0075732">
    <property type="term" value="P:viral penetration into host nucleus"/>
    <property type="evidence" value="ECO:0007669"/>
    <property type="project" value="UniProtKB-KW"/>
</dbReference>
<dbReference type="CDD" id="cd01647">
    <property type="entry name" value="RT_LTR"/>
    <property type="match status" value="1"/>
</dbReference>
<dbReference type="Gene3D" id="3.30.70.270">
    <property type="match status" value="2"/>
</dbReference>
<dbReference type="Gene3D" id="3.10.10.10">
    <property type="entry name" value="HIV Type 1 Reverse Transcriptase, subunit A, domain 1"/>
    <property type="match status" value="1"/>
</dbReference>
<dbReference type="Gene3D" id="3.30.420.10">
    <property type="entry name" value="Ribonuclease H-like superfamily/Ribonuclease H"/>
    <property type="match status" value="1"/>
</dbReference>
<dbReference type="InterPro" id="IPR001969">
    <property type="entry name" value="Aspartic_peptidase_AS"/>
</dbReference>
<dbReference type="InterPro" id="IPR043502">
    <property type="entry name" value="DNA/RNA_pol_sf"/>
</dbReference>
<dbReference type="InterPro" id="IPR001995">
    <property type="entry name" value="Peptidase_A2_cat"/>
</dbReference>
<dbReference type="InterPro" id="IPR018061">
    <property type="entry name" value="Retropepsins"/>
</dbReference>
<dbReference type="InterPro" id="IPR043128">
    <property type="entry name" value="Rev_trsase/Diguanyl_cyclase"/>
</dbReference>
<dbReference type="InterPro" id="IPR002156">
    <property type="entry name" value="RNaseH_domain"/>
</dbReference>
<dbReference type="InterPro" id="IPR036397">
    <property type="entry name" value="RNaseH_sf"/>
</dbReference>
<dbReference type="InterPro" id="IPR000477">
    <property type="entry name" value="RT_dom"/>
</dbReference>
<dbReference type="InterPro" id="IPR041373">
    <property type="entry name" value="RT_RNaseH"/>
</dbReference>
<dbReference type="InterPro" id="IPR051320">
    <property type="entry name" value="Viral_Replic_Matur_Polypro"/>
</dbReference>
<dbReference type="InterPro" id="IPR001878">
    <property type="entry name" value="Znf_CCHC"/>
</dbReference>
<dbReference type="InterPro" id="IPR036875">
    <property type="entry name" value="Znf_CCHC_sf"/>
</dbReference>
<dbReference type="PANTHER" id="PTHR33064">
    <property type="entry name" value="POL PROTEIN"/>
    <property type="match status" value="1"/>
</dbReference>
<dbReference type="PANTHER" id="PTHR33064:SF37">
    <property type="entry name" value="RIBONUCLEASE H"/>
    <property type="match status" value="1"/>
</dbReference>
<dbReference type="Pfam" id="PF22909">
    <property type="entry name" value="Caulimovir_coat_dom"/>
    <property type="match status" value="1"/>
</dbReference>
<dbReference type="Pfam" id="PF17917">
    <property type="entry name" value="RT_RNaseH"/>
    <property type="match status" value="1"/>
</dbReference>
<dbReference type="Pfam" id="PF00077">
    <property type="entry name" value="RVP"/>
    <property type="match status" value="1"/>
</dbReference>
<dbReference type="Pfam" id="PF00078">
    <property type="entry name" value="RVT_1"/>
    <property type="match status" value="1"/>
</dbReference>
<dbReference type="SMART" id="SM00343">
    <property type="entry name" value="ZnF_C2HC"/>
    <property type="match status" value="1"/>
</dbReference>
<dbReference type="SUPFAM" id="SSF56672">
    <property type="entry name" value="DNA/RNA polymerases"/>
    <property type="match status" value="1"/>
</dbReference>
<dbReference type="SUPFAM" id="SSF57756">
    <property type="entry name" value="Retrovirus zinc finger-like domains"/>
    <property type="match status" value="1"/>
</dbReference>
<dbReference type="PROSITE" id="PS50175">
    <property type="entry name" value="ASP_PROT_RETROV"/>
    <property type="match status" value="1"/>
</dbReference>
<dbReference type="PROSITE" id="PS00141">
    <property type="entry name" value="ASP_PROTEASE"/>
    <property type="match status" value="1"/>
</dbReference>
<dbReference type="PROSITE" id="PS50879">
    <property type="entry name" value="RNASE_H_1"/>
    <property type="match status" value="1"/>
</dbReference>
<dbReference type="PROSITE" id="PS50878">
    <property type="entry name" value="RT_POL"/>
    <property type="match status" value="1"/>
</dbReference>
<dbReference type="PROSITE" id="PS50158">
    <property type="entry name" value="ZF_CCHC"/>
    <property type="match status" value="1"/>
</dbReference>
<reference key="1">
    <citation type="journal article" date="1990" name="Nucleic Acids Res.">
        <title>Properties of Commelina yellow mottle virus's complete DNA sequence, genomic discontinuities and transcript suggest that it is a pararetrovirus.</title>
        <authorList>
            <person name="Medberry S.L."/>
            <person name="Lockhart Olszewski N.E."/>
        </authorList>
    </citation>
    <scope>NUCLEOTIDE SEQUENCE [GENOMIC DNA]</scope>
</reference>
<keyword id="KW-0064">Aspartyl protease</keyword>
<keyword id="KW-0255">Endonuclease</keyword>
<keyword id="KW-0378">Hydrolase</keyword>
<keyword id="KW-0460">Magnesium</keyword>
<keyword id="KW-0479">Metal-binding</keyword>
<keyword id="KW-0540">Nuclease</keyword>
<keyword id="KW-0548">Nucleotidyltransferase</keyword>
<keyword id="KW-0645">Protease</keyword>
<keyword id="KW-1185">Reference proteome</keyword>
<keyword id="KW-0695">RNA-directed DNA polymerase</keyword>
<keyword id="KW-0808">Transferase</keyword>
<keyword id="KW-0813">Transport</keyword>
<keyword id="KW-0916">Viral movement protein</keyword>
<keyword id="KW-1163">Viral penetration into host nucleus</keyword>
<keyword id="KW-1160">Virus entry into host cell</keyword>
<keyword id="KW-0862">Zinc</keyword>
<keyword id="KW-0863">Zinc-finger</keyword>
<accession>P19199</accession>
<accession>P19202</accession>
<feature type="chain" id="PRO_0000199569" description="Polyprotein P3">
    <location>
        <begin position="1"/>
        <end position="1886"/>
    </location>
</feature>
<feature type="domain" description="Peptidase A2" evidence="3">
    <location>
        <begin position="1215"/>
        <end position="1292"/>
    </location>
</feature>
<feature type="domain" description="Reverse transcriptase" evidence="4">
    <location>
        <begin position="1425"/>
        <end position="1615"/>
    </location>
</feature>
<feature type="domain" description="RNase H type-1" evidence="5">
    <location>
        <begin position="1706"/>
        <end position="1841"/>
    </location>
</feature>
<feature type="zinc finger region" description="CCHC-type" evidence="2">
    <location>
        <begin position="879"/>
        <end position="896"/>
    </location>
</feature>
<feature type="region of interest" description="Disordered" evidence="7">
    <location>
        <begin position="1"/>
        <end position="24"/>
    </location>
</feature>
<feature type="region of interest" description="Disordered" evidence="7">
    <location>
        <begin position="420"/>
        <end position="466"/>
    </location>
</feature>
<feature type="region of interest" description="Disordered" evidence="7">
    <location>
        <begin position="478"/>
        <end position="529"/>
    </location>
</feature>
<feature type="compositionally biased region" description="Polar residues" evidence="7">
    <location>
        <begin position="9"/>
        <end position="20"/>
    </location>
</feature>
<feature type="compositionally biased region" description="Low complexity" evidence="7">
    <location>
        <begin position="488"/>
        <end position="498"/>
    </location>
</feature>
<feature type="active site" description="For protease activity" evidence="6">
    <location>
        <position position="1220"/>
    </location>
</feature>
<feature type="binding site" evidence="5">
    <location>
        <position position="1715"/>
    </location>
    <ligand>
        <name>Mg(2+)</name>
        <dbReference type="ChEBI" id="CHEBI:18420"/>
        <label>1</label>
    </ligand>
</feature>
<feature type="binding site" evidence="5">
    <location>
        <position position="1715"/>
    </location>
    <ligand>
        <name>Mg(2+)</name>
        <dbReference type="ChEBI" id="CHEBI:18420"/>
        <label>2</label>
    </ligand>
</feature>
<feature type="binding site" evidence="5">
    <location>
        <position position="1758"/>
    </location>
    <ligand>
        <name>Mg(2+)</name>
        <dbReference type="ChEBI" id="CHEBI:18420"/>
        <label>1</label>
    </ligand>
</feature>
<feature type="binding site" evidence="5">
    <location>
        <position position="1784"/>
    </location>
    <ligand>
        <name>Mg(2+)</name>
        <dbReference type="ChEBI" id="CHEBI:18420"/>
        <label>1</label>
    </ligand>
</feature>
<feature type="binding site" evidence="5">
    <location>
        <position position="1833"/>
    </location>
    <ligand>
        <name>Mg(2+)</name>
        <dbReference type="ChEBI" id="CHEBI:18420"/>
        <label>2</label>
    </ligand>
</feature>